<accession>P10777</accession>
<protein>
    <recommendedName>
        <fullName>Hemoglobin subunit alpha-1</fullName>
    </recommendedName>
    <alternativeName>
        <fullName>Alpha-1-globin</fullName>
    </alternativeName>
    <alternativeName>
        <fullName>Hemoglobin alpha-1 chain</fullName>
    </alternativeName>
</protein>
<reference key="1">
    <citation type="journal article" date="1989" name="Eur. J. Biochem.">
        <title>Hemoglobin from the Antarctic fish Notothenia coriiceps neglecta. 2. Amino acid sequence of the alpha chain of Hb1.</title>
        <authorList>
            <person name="D'Avino R."/>
            <person name="Caruso C."/>
            <person name="Romano M."/>
            <person name="Camardella L."/>
            <person name="Rutigliano B."/>
            <person name="di Prisco G."/>
        </authorList>
    </citation>
    <scope>PROTEIN SEQUENCE</scope>
    <scope>ACETYLATION AT SER-1</scope>
</reference>
<reference key="2">
    <citation type="journal article" date="1989" name="FEBS Lett.">
        <title>The amino acid sequence of the alpha- and beta-chains of the two hemoglobins of the Antarctic fish Notothenia coriiceps neglecta.</title>
        <authorList>
            <person name="D'Avino R."/>
            <person name="Caruso C."/>
            <person name="Schinina M.E."/>
            <person name="Rutigliano B."/>
            <person name="Romano M."/>
            <person name="Camardella L."/>
            <person name="Bosa F."/>
            <person name="Barra D."/>
            <person name="di Prisco G."/>
        </authorList>
    </citation>
    <scope>PROTEIN SEQUENCE</scope>
</reference>
<organism>
    <name type="scientific">Notothenia neglecta</name>
    <name type="common">Yellowbelly rockcod</name>
    <name type="synonym">Notothenia coriiceps neglecta</name>
    <dbReference type="NCBI Taxonomy" id="202063"/>
    <lineage>
        <taxon>Eukaryota</taxon>
        <taxon>Metazoa</taxon>
        <taxon>Chordata</taxon>
        <taxon>Craniata</taxon>
        <taxon>Vertebrata</taxon>
        <taxon>Euteleostomi</taxon>
        <taxon>Actinopterygii</taxon>
        <taxon>Neopterygii</taxon>
        <taxon>Teleostei</taxon>
        <taxon>Neoteleostei</taxon>
        <taxon>Acanthomorphata</taxon>
        <taxon>Eupercaria</taxon>
        <taxon>Perciformes</taxon>
        <taxon>Notothenioidei</taxon>
        <taxon>Nototheniidae</taxon>
        <taxon>Notothenia</taxon>
    </lineage>
</organism>
<keyword id="KW-0007">Acetylation</keyword>
<keyword id="KW-0903">Direct protein sequencing</keyword>
<keyword id="KW-0349">Heme</keyword>
<keyword id="KW-0408">Iron</keyword>
<keyword id="KW-0479">Metal-binding</keyword>
<keyword id="KW-0561">Oxygen transport</keyword>
<keyword id="KW-0813">Transport</keyword>
<feature type="chain" id="PRO_0000052703" description="Hemoglobin subunit alpha-1">
    <location>
        <begin position="1"/>
        <end position="142"/>
    </location>
</feature>
<feature type="domain" description="Globin" evidence="1">
    <location>
        <begin position="1"/>
        <end position="142"/>
    </location>
</feature>
<feature type="binding site" evidence="1">
    <location>
        <position position="59"/>
    </location>
    <ligand>
        <name>O2</name>
        <dbReference type="ChEBI" id="CHEBI:15379"/>
    </ligand>
</feature>
<feature type="binding site" description="proximal binding residue" evidence="1">
    <location>
        <position position="88"/>
    </location>
    <ligand>
        <name>heme b</name>
        <dbReference type="ChEBI" id="CHEBI:60344"/>
    </ligand>
    <ligandPart>
        <name>Fe</name>
        <dbReference type="ChEBI" id="CHEBI:18248"/>
    </ligandPart>
</feature>
<feature type="modified residue" description="N-acetylserine" evidence="2">
    <location>
        <position position="1"/>
    </location>
</feature>
<evidence type="ECO:0000255" key="1">
    <source>
        <dbReference type="PROSITE-ProRule" id="PRU00238"/>
    </source>
</evidence>
<evidence type="ECO:0000269" key="2">
    <source>
    </source>
</evidence>
<proteinExistence type="evidence at protein level"/>
<comment type="function">
    <text>Involved in oxygen transport from gills to the various peripheral tissues.</text>
</comment>
<comment type="subunit">
    <text>Hb1 is a heterotetramer of two alpha-2 chains and two beta chains.</text>
</comment>
<comment type="tissue specificity">
    <text>Red blood cells.</text>
</comment>
<comment type="miscellaneous">
    <text>This fish has two hemoglobins: Hb1 and Hb2.</text>
</comment>
<comment type="similarity">
    <text evidence="1">Belongs to the globin family.</text>
</comment>
<name>HBA1_NOTNE</name>
<sequence length="142" mass="15495">SLSDKDKAAVKALWSKIGKSADAIGNDALSRMIVVYPQTKTYFSHWPSVTPGHPDIKAHGKKVMGGLAIAVSKINDLKAGLSNLSQQHAYKLRVDPANFKILNHCILVVISTMFPKNFTPQAHVSLNKFLSGVALALAQRYR</sequence>
<gene>
    <name type="primary">hba1</name>
</gene>
<dbReference type="PIR" id="S02816">
    <property type="entry name" value="S02816"/>
</dbReference>
<dbReference type="SMR" id="P10777"/>
<dbReference type="iPTMnet" id="P10777"/>
<dbReference type="GO" id="GO:0072562">
    <property type="term" value="C:blood microparticle"/>
    <property type="evidence" value="ECO:0007669"/>
    <property type="project" value="TreeGrafter"/>
</dbReference>
<dbReference type="GO" id="GO:0031838">
    <property type="term" value="C:haptoglobin-hemoglobin complex"/>
    <property type="evidence" value="ECO:0007669"/>
    <property type="project" value="TreeGrafter"/>
</dbReference>
<dbReference type="GO" id="GO:0005833">
    <property type="term" value="C:hemoglobin complex"/>
    <property type="evidence" value="ECO:0007669"/>
    <property type="project" value="InterPro"/>
</dbReference>
<dbReference type="GO" id="GO:0031720">
    <property type="term" value="F:haptoglobin binding"/>
    <property type="evidence" value="ECO:0007669"/>
    <property type="project" value="TreeGrafter"/>
</dbReference>
<dbReference type="GO" id="GO:0020037">
    <property type="term" value="F:heme binding"/>
    <property type="evidence" value="ECO:0007669"/>
    <property type="project" value="InterPro"/>
</dbReference>
<dbReference type="GO" id="GO:0005506">
    <property type="term" value="F:iron ion binding"/>
    <property type="evidence" value="ECO:0007669"/>
    <property type="project" value="InterPro"/>
</dbReference>
<dbReference type="GO" id="GO:0043177">
    <property type="term" value="F:organic acid binding"/>
    <property type="evidence" value="ECO:0007669"/>
    <property type="project" value="TreeGrafter"/>
</dbReference>
<dbReference type="GO" id="GO:0019825">
    <property type="term" value="F:oxygen binding"/>
    <property type="evidence" value="ECO:0007669"/>
    <property type="project" value="InterPro"/>
</dbReference>
<dbReference type="GO" id="GO:0005344">
    <property type="term" value="F:oxygen carrier activity"/>
    <property type="evidence" value="ECO:0007669"/>
    <property type="project" value="UniProtKB-KW"/>
</dbReference>
<dbReference type="GO" id="GO:0004601">
    <property type="term" value="F:peroxidase activity"/>
    <property type="evidence" value="ECO:0007669"/>
    <property type="project" value="TreeGrafter"/>
</dbReference>
<dbReference type="GO" id="GO:0042744">
    <property type="term" value="P:hydrogen peroxide catabolic process"/>
    <property type="evidence" value="ECO:0007669"/>
    <property type="project" value="TreeGrafter"/>
</dbReference>
<dbReference type="CDD" id="cd08927">
    <property type="entry name" value="Hb-alpha-like"/>
    <property type="match status" value="1"/>
</dbReference>
<dbReference type="FunFam" id="1.10.490.10:FF:000002">
    <property type="entry name" value="Hemoglobin subunit alpha"/>
    <property type="match status" value="1"/>
</dbReference>
<dbReference type="Gene3D" id="1.10.490.10">
    <property type="entry name" value="Globins"/>
    <property type="match status" value="1"/>
</dbReference>
<dbReference type="InterPro" id="IPR000971">
    <property type="entry name" value="Globin"/>
</dbReference>
<dbReference type="InterPro" id="IPR009050">
    <property type="entry name" value="Globin-like_sf"/>
</dbReference>
<dbReference type="InterPro" id="IPR012292">
    <property type="entry name" value="Globin/Proto"/>
</dbReference>
<dbReference type="InterPro" id="IPR002338">
    <property type="entry name" value="Hemoglobin_a-typ"/>
</dbReference>
<dbReference type="InterPro" id="IPR050056">
    <property type="entry name" value="Hemoglobin_oxygen_transport"/>
</dbReference>
<dbReference type="InterPro" id="IPR002339">
    <property type="entry name" value="Hemoglobin_pi"/>
</dbReference>
<dbReference type="PANTHER" id="PTHR11442">
    <property type="entry name" value="HEMOGLOBIN FAMILY MEMBER"/>
    <property type="match status" value="1"/>
</dbReference>
<dbReference type="PANTHER" id="PTHR11442:SF41">
    <property type="entry name" value="HEMOGLOBIN SUBUNIT ZETA"/>
    <property type="match status" value="1"/>
</dbReference>
<dbReference type="Pfam" id="PF00042">
    <property type="entry name" value="Globin"/>
    <property type="match status" value="1"/>
</dbReference>
<dbReference type="PRINTS" id="PR00612">
    <property type="entry name" value="ALPHAHAEM"/>
</dbReference>
<dbReference type="PRINTS" id="PR00815">
    <property type="entry name" value="PIHAEM"/>
</dbReference>
<dbReference type="SUPFAM" id="SSF46458">
    <property type="entry name" value="Globin-like"/>
    <property type="match status" value="1"/>
</dbReference>
<dbReference type="PROSITE" id="PS01033">
    <property type="entry name" value="GLOBIN"/>
    <property type="match status" value="1"/>
</dbReference>